<gene>
    <name evidence="1" type="primary">por</name>
</gene>
<comment type="function">
    <text evidence="1">This enzyme is required for electron transfer from NADP to cytochrome P450 in microsomes. It can also provide electron transfer to heme oxygenase and cytochrome B5.</text>
</comment>
<comment type="catalytic activity">
    <reaction evidence="1">
        <text>2 oxidized [cytochrome P450] + NADPH = 2 reduced [cytochrome P450] + NADP(+) + H(+)</text>
        <dbReference type="Rhea" id="RHEA:24040"/>
        <dbReference type="Rhea" id="RHEA-COMP:14627"/>
        <dbReference type="Rhea" id="RHEA-COMP:14628"/>
        <dbReference type="ChEBI" id="CHEBI:15378"/>
        <dbReference type="ChEBI" id="CHEBI:55376"/>
        <dbReference type="ChEBI" id="CHEBI:57783"/>
        <dbReference type="ChEBI" id="CHEBI:58349"/>
        <dbReference type="ChEBI" id="CHEBI:60344"/>
        <dbReference type="EC" id="1.6.2.4"/>
    </reaction>
</comment>
<comment type="cofactor">
    <cofactor evidence="1">
        <name>FAD</name>
        <dbReference type="ChEBI" id="CHEBI:57692"/>
    </cofactor>
    <text evidence="1">Binds 1 FAD per monomer.</text>
</comment>
<comment type="cofactor">
    <cofactor evidence="1">
        <name>FMN</name>
        <dbReference type="ChEBI" id="CHEBI:58210"/>
    </cofactor>
    <text evidence="1">Binds 1 FMN per monomer.</text>
</comment>
<comment type="subcellular location">
    <subcellularLocation>
        <location evidence="1">Endoplasmic reticulum membrane</location>
        <topology evidence="1">Single-pass membrane protein</topology>
        <orientation evidence="1">Cytoplasmic side</orientation>
    </subcellularLocation>
</comment>
<comment type="similarity">
    <text evidence="1">Belongs to the NADPH--cytochrome P450 reductase family.</text>
</comment>
<comment type="similarity">
    <text evidence="1">In the N-terminal section; belongs to the flavodoxin family.</text>
</comment>
<comment type="similarity">
    <text evidence="1">In the C-terminal section; belongs to the flavoprotein pyridine nucleotide cytochrome reductase family.</text>
</comment>
<protein>
    <recommendedName>
        <fullName evidence="1">NADPH--cytochrome P450 reductase</fullName>
        <shortName evidence="1">CPR</shortName>
        <shortName evidence="1">P450R</shortName>
        <ecNumber evidence="1">1.6.2.4</ecNumber>
    </recommendedName>
</protein>
<reference key="1">
    <citation type="journal article" date="1987" name="J. Chromatogr. A">
        <title>Structural comparison between the trout and mammalian hydrophilic domain of NADPH-cytochrome P-450 reductase.</title>
        <authorList>
            <person name="Urenjak J."/>
            <person name="Linder D."/>
            <person name="Lumper L."/>
        </authorList>
    </citation>
    <scope>PROTEIN SEQUENCE</scope>
</reference>
<sequence>KLDQPAPSTQETSFIEKMKKTGRNIVVFYGSQTGTGEEFANRLSKDAHRYGMGSMAADPEEYDMSELSRLAEIGNSLAIFCMATYGEGDPTDNAQDFYDWLQETDGQLSGVNYPVFALGDKTYEHYNAMGAYVDKRLEELGAKRVFDLGMGDDDGNLEEDFVTWREQFWPAMCEHFGVEASGEDSSVRQYELKEHNDINMNKVYTGELGRLKSFETQKPPFDAKNPFLAPVTVNRKLNKAGELHKMHLEVDITGSKIRYESGDHVAVYPTNNTVIVNRLGQILGVDLDSVISLNNLDEESNKKHPFPCPTTYRTALTHYLDIIHPPRTNVLYELAQYATDLKDQENTDSMASSAPEGKALYQSFVLEDNRNILAILEDLPSLRPPIDHLCELMPRLQARYYSIASSSKVHPNSIHICAVLVEYXTKGVATTWLKYIRKSQFRLPFKASNPVIMVGPGTGIAPFMGFIQERGWLKESGKEVGETVLYCGCRHKEEDYLYQEELEQAHKKGALTKLNVAFSREQDQKVYVQHLLRKNKVDLWRQIHEDYAHIYICGDARNMARDVQTAFYEIAEELGGMTRTQATDYIKKLMTKGRYSQDVWS</sequence>
<keyword id="KW-0903">Direct protein sequencing</keyword>
<keyword id="KW-0256">Endoplasmic reticulum</keyword>
<keyword id="KW-0274">FAD</keyword>
<keyword id="KW-0285">Flavoprotein</keyword>
<keyword id="KW-0288">FMN</keyword>
<keyword id="KW-0472">Membrane</keyword>
<keyword id="KW-0521">NADP</keyword>
<keyword id="KW-0560">Oxidoreductase</keyword>
<keyword id="KW-1185">Reference proteome</keyword>
<organism>
    <name type="scientific">Salmo trutta</name>
    <name type="common">Brown trout</name>
    <dbReference type="NCBI Taxonomy" id="8032"/>
    <lineage>
        <taxon>Eukaryota</taxon>
        <taxon>Metazoa</taxon>
        <taxon>Chordata</taxon>
        <taxon>Craniata</taxon>
        <taxon>Vertebrata</taxon>
        <taxon>Euteleostomi</taxon>
        <taxon>Actinopterygii</taxon>
        <taxon>Neopterygii</taxon>
        <taxon>Teleostei</taxon>
        <taxon>Protacanthopterygii</taxon>
        <taxon>Salmoniformes</taxon>
        <taxon>Salmonidae</taxon>
        <taxon>Salmoninae</taxon>
        <taxon>Salmo</taxon>
    </lineage>
</organism>
<dbReference type="EC" id="1.6.2.4" evidence="1"/>
<dbReference type="PIR" id="A28577">
    <property type="entry name" value="A28577"/>
</dbReference>
<dbReference type="InParanoid" id="P19618"/>
<dbReference type="Proteomes" id="UP000472277">
    <property type="component" value="Unplaced"/>
</dbReference>
<dbReference type="GO" id="GO:0005829">
    <property type="term" value="C:cytosol"/>
    <property type="evidence" value="ECO:0007669"/>
    <property type="project" value="TreeGrafter"/>
</dbReference>
<dbReference type="GO" id="GO:0005789">
    <property type="term" value="C:endoplasmic reticulum membrane"/>
    <property type="evidence" value="ECO:0007669"/>
    <property type="project" value="UniProtKB-SubCell"/>
</dbReference>
<dbReference type="GO" id="GO:0050660">
    <property type="term" value="F:flavin adenine dinucleotide binding"/>
    <property type="evidence" value="ECO:0007669"/>
    <property type="project" value="TreeGrafter"/>
</dbReference>
<dbReference type="GO" id="GO:0010181">
    <property type="term" value="F:FMN binding"/>
    <property type="evidence" value="ECO:0007669"/>
    <property type="project" value="InterPro"/>
</dbReference>
<dbReference type="GO" id="GO:0003958">
    <property type="term" value="F:NADPH-hemoprotein reductase activity"/>
    <property type="evidence" value="ECO:0007669"/>
    <property type="project" value="UniProtKB-EC"/>
</dbReference>
<dbReference type="GO" id="GO:0009725">
    <property type="term" value="P:response to hormone"/>
    <property type="evidence" value="ECO:0007669"/>
    <property type="project" value="TreeGrafter"/>
</dbReference>
<dbReference type="CDD" id="cd06204">
    <property type="entry name" value="CYPOR"/>
    <property type="match status" value="1"/>
</dbReference>
<dbReference type="FunFam" id="1.20.990.10:FF:000001">
    <property type="entry name" value="NADPH--cytochrome P450 reductase"/>
    <property type="match status" value="1"/>
</dbReference>
<dbReference type="FunFam" id="3.40.50.360:FF:000009">
    <property type="entry name" value="NADPH--cytochrome P450 reductase"/>
    <property type="match status" value="1"/>
</dbReference>
<dbReference type="FunFam" id="3.40.50.80:FF:000001">
    <property type="entry name" value="NADPH--cytochrome P450 reductase 1"/>
    <property type="match status" value="1"/>
</dbReference>
<dbReference type="Gene3D" id="3.40.50.360">
    <property type="match status" value="1"/>
</dbReference>
<dbReference type="Gene3D" id="1.20.990.10">
    <property type="entry name" value="NADPH-cytochrome p450 Reductase, Chain A, domain 3"/>
    <property type="match status" value="1"/>
</dbReference>
<dbReference type="Gene3D" id="3.40.50.80">
    <property type="entry name" value="Nucleotide-binding domain of ferredoxin-NADP reductase (FNR) module"/>
    <property type="match status" value="1"/>
</dbReference>
<dbReference type="Gene3D" id="2.40.30.10">
    <property type="entry name" value="Translation factors"/>
    <property type="match status" value="1"/>
</dbReference>
<dbReference type="InterPro" id="IPR003097">
    <property type="entry name" value="CysJ-like_FAD-binding"/>
</dbReference>
<dbReference type="InterPro" id="IPR017927">
    <property type="entry name" value="FAD-bd_FR_type"/>
</dbReference>
<dbReference type="InterPro" id="IPR001094">
    <property type="entry name" value="Flavdoxin-like"/>
</dbReference>
<dbReference type="InterPro" id="IPR008254">
    <property type="entry name" value="Flavodoxin/NO_synth"/>
</dbReference>
<dbReference type="InterPro" id="IPR001709">
    <property type="entry name" value="Flavoprot_Pyr_Nucl_cyt_Rdtase"/>
</dbReference>
<dbReference type="InterPro" id="IPR029039">
    <property type="entry name" value="Flavoprotein-like_sf"/>
</dbReference>
<dbReference type="InterPro" id="IPR039261">
    <property type="entry name" value="FNR_nucleotide-bd"/>
</dbReference>
<dbReference type="InterPro" id="IPR023173">
    <property type="entry name" value="NADPH_Cyt_P450_Rdtase_alpha"/>
</dbReference>
<dbReference type="InterPro" id="IPR001433">
    <property type="entry name" value="OxRdtase_FAD/NAD-bd"/>
</dbReference>
<dbReference type="InterPro" id="IPR017938">
    <property type="entry name" value="Riboflavin_synthase-like_b-brl"/>
</dbReference>
<dbReference type="PANTHER" id="PTHR19384:SF17">
    <property type="entry name" value="NADPH--CYTOCHROME P450 REDUCTASE"/>
    <property type="match status" value="1"/>
</dbReference>
<dbReference type="PANTHER" id="PTHR19384">
    <property type="entry name" value="NITRIC OXIDE SYNTHASE-RELATED"/>
    <property type="match status" value="1"/>
</dbReference>
<dbReference type="Pfam" id="PF00667">
    <property type="entry name" value="FAD_binding_1"/>
    <property type="match status" value="1"/>
</dbReference>
<dbReference type="Pfam" id="PF00258">
    <property type="entry name" value="Flavodoxin_1"/>
    <property type="match status" value="1"/>
</dbReference>
<dbReference type="Pfam" id="PF00175">
    <property type="entry name" value="NAD_binding_1"/>
    <property type="match status" value="1"/>
</dbReference>
<dbReference type="PRINTS" id="PR00369">
    <property type="entry name" value="FLAVODOXIN"/>
</dbReference>
<dbReference type="PRINTS" id="PR00371">
    <property type="entry name" value="FPNCR"/>
</dbReference>
<dbReference type="SUPFAM" id="SSF52343">
    <property type="entry name" value="Ferredoxin reductase-like, C-terminal NADP-linked domain"/>
    <property type="match status" value="1"/>
</dbReference>
<dbReference type="SUPFAM" id="SSF52218">
    <property type="entry name" value="Flavoproteins"/>
    <property type="match status" value="1"/>
</dbReference>
<dbReference type="SUPFAM" id="SSF63380">
    <property type="entry name" value="Riboflavin synthase domain-like"/>
    <property type="match status" value="1"/>
</dbReference>
<dbReference type="PROSITE" id="PS51384">
    <property type="entry name" value="FAD_FR"/>
    <property type="match status" value="1"/>
</dbReference>
<dbReference type="PROSITE" id="PS50902">
    <property type="entry name" value="FLAVODOXIN_LIKE"/>
    <property type="match status" value="1"/>
</dbReference>
<name>NCPR_SALTR</name>
<evidence type="ECO:0000255" key="1">
    <source>
        <dbReference type="HAMAP-Rule" id="MF_03212"/>
    </source>
</evidence>
<evidence type="ECO:0000305" key="2"/>
<feature type="chain" id="PRO_0000167601" description="NADPH--cytochrome P450 reductase">
    <location>
        <begin position="1" status="less than"/>
        <end position="601"/>
    </location>
</feature>
<feature type="domain" description="Flavodoxin-like" evidence="1">
    <location>
        <begin position="25"/>
        <end position="169"/>
    </location>
</feature>
<feature type="domain" description="FAD-binding FR-type" evidence="1">
    <location>
        <begin position="224"/>
        <end position="425"/>
    </location>
</feature>
<feature type="binding site" evidence="1">
    <location>
        <begin position="31"/>
        <end position="36"/>
    </location>
    <ligand>
        <name>FMN</name>
        <dbReference type="ChEBI" id="CHEBI:58210"/>
    </ligand>
</feature>
<feature type="binding site" evidence="1">
    <location>
        <begin position="83"/>
        <end position="86"/>
    </location>
    <ligand>
        <name>FMN</name>
        <dbReference type="ChEBI" id="CHEBI:58210"/>
    </ligand>
</feature>
<feature type="binding site" evidence="1">
    <location>
        <begin position="118"/>
        <end position="127"/>
    </location>
    <ligand>
        <name>FMN</name>
        <dbReference type="ChEBI" id="CHEBI:58210"/>
    </ligand>
</feature>
<feature type="binding site" evidence="1">
    <location>
        <position position="153"/>
    </location>
    <ligand>
        <name>FMN</name>
        <dbReference type="ChEBI" id="CHEBI:58210"/>
    </ligand>
</feature>
<feature type="binding site" evidence="1">
    <location>
        <begin position="399"/>
        <end position="402"/>
    </location>
    <ligand>
        <name>FAD</name>
        <dbReference type="ChEBI" id="CHEBI:57692"/>
    </ligand>
</feature>
<feature type="binding site" evidence="1">
    <location>
        <begin position="417"/>
        <end position="419"/>
    </location>
    <ligand>
        <name>FAD</name>
        <dbReference type="ChEBI" id="CHEBI:57692"/>
    </ligand>
</feature>
<feature type="binding site" evidence="1">
    <location>
        <position position="423"/>
    </location>
    <ligand>
        <name>FAD</name>
        <dbReference type="ChEBI" id="CHEBI:57692"/>
    </ligand>
</feature>
<feature type="binding site" evidence="1">
    <location>
        <begin position="427"/>
        <end position="430"/>
    </location>
    <ligand>
        <name>FAD</name>
        <dbReference type="ChEBI" id="CHEBI:57692"/>
    </ligand>
</feature>
<feature type="binding site" evidence="1">
    <location>
        <position position="458"/>
    </location>
    <ligand>
        <name>NADP(+)</name>
        <dbReference type="ChEBI" id="CHEBI:58349"/>
    </ligand>
</feature>
<feature type="binding site" evidence="1">
    <location>
        <begin position="519"/>
        <end position="520"/>
    </location>
    <ligand>
        <name>NADP(+)</name>
        <dbReference type="ChEBI" id="CHEBI:58349"/>
    </ligand>
</feature>
<feature type="binding site" evidence="1">
    <location>
        <begin position="525"/>
        <end position="529"/>
    </location>
    <ligand>
        <name>NADP(+)</name>
        <dbReference type="ChEBI" id="CHEBI:58349"/>
    </ligand>
</feature>
<feature type="binding site" evidence="1">
    <location>
        <position position="562"/>
    </location>
    <ligand>
        <name>NADP(+)</name>
        <dbReference type="ChEBI" id="CHEBI:58349"/>
    </ligand>
</feature>
<feature type="binding site" evidence="1">
    <location>
        <position position="600"/>
    </location>
    <ligand>
        <name>FAD</name>
        <dbReference type="ChEBI" id="CHEBI:57692"/>
    </ligand>
</feature>
<feature type="non-consecutive residues" evidence="2">
    <location>
        <begin position="426"/>
        <end position="427"/>
    </location>
</feature>
<feature type="non-consecutive residues" evidence="2">
    <location>
        <begin position="434"/>
        <end position="435"/>
    </location>
</feature>
<feature type="non-terminal residue">
    <location>
        <position position="1"/>
    </location>
</feature>
<proteinExistence type="evidence at protein level"/>
<accession>P19618</accession>